<organism>
    <name type="scientific">Saccharophagus degradans (strain 2-40 / ATCC 43961 / DSM 17024)</name>
    <dbReference type="NCBI Taxonomy" id="203122"/>
    <lineage>
        <taxon>Bacteria</taxon>
        <taxon>Pseudomonadati</taxon>
        <taxon>Pseudomonadota</taxon>
        <taxon>Gammaproteobacteria</taxon>
        <taxon>Cellvibrionales</taxon>
        <taxon>Cellvibrionaceae</taxon>
        <taxon>Saccharophagus</taxon>
    </lineage>
</organism>
<name>ASSY_SACD2</name>
<accession>Q21HZ6</accession>
<keyword id="KW-0028">Amino-acid biosynthesis</keyword>
<keyword id="KW-0055">Arginine biosynthesis</keyword>
<keyword id="KW-0067">ATP-binding</keyword>
<keyword id="KW-0963">Cytoplasm</keyword>
<keyword id="KW-0436">Ligase</keyword>
<keyword id="KW-0547">Nucleotide-binding</keyword>
<keyword id="KW-1185">Reference proteome</keyword>
<evidence type="ECO:0000255" key="1">
    <source>
        <dbReference type="HAMAP-Rule" id="MF_00005"/>
    </source>
</evidence>
<sequence length="409" mass="45740">MSTNSSIKKVVLAYSGGLDTSVIVKWLQETYNCEVVTFTADIGQGEEVEPARAKAEALGVKEIYIDDLREEFVRDYVFPMFRANTIYEGEYLLGTSIARPLIAKRLIEIANETGADAISHGATGKGNDQVRFELGAYALKPGIHVIAPWRDWDLTSRETLMDYCAKHNIPVDYTKAKKKSPYSMDANLLHISYEGGILEDPWAEAEEDMWRWSVSPEAAPDQPEYLELTFKHGDIVAIDGVEMSPATVLETLNKRGGAHGVGRLDIVENRYVGMKSRGCYETPGGTIILRAHRAIESITLDREVAHLKDSLMPKYAEMIYNGYWWSPERQMLQTAIDNSQGPVNGDVRVKLYKGSVTVVGRRSNDSLFDEKIATFEDDAGAYNQKDAEGFIKLNALRMRIAAQKGRKLL</sequence>
<reference key="1">
    <citation type="journal article" date="2008" name="PLoS Genet.">
        <title>Complete genome sequence of the complex carbohydrate-degrading marine bacterium, Saccharophagus degradans strain 2-40 T.</title>
        <authorList>
            <person name="Weiner R.M."/>
            <person name="Taylor L.E. II"/>
            <person name="Henrissat B."/>
            <person name="Hauser L."/>
            <person name="Land M."/>
            <person name="Coutinho P.M."/>
            <person name="Rancurel C."/>
            <person name="Saunders E.H."/>
            <person name="Longmire A.G."/>
            <person name="Zhang H."/>
            <person name="Bayer E.A."/>
            <person name="Gilbert H.J."/>
            <person name="Larimer F."/>
            <person name="Zhulin I.B."/>
            <person name="Ekborg N.A."/>
            <person name="Lamed R."/>
            <person name="Richardson P.M."/>
            <person name="Borovok I."/>
            <person name="Hutcheson S."/>
        </authorList>
    </citation>
    <scope>NUCLEOTIDE SEQUENCE [LARGE SCALE GENOMIC DNA]</scope>
    <source>
        <strain>2-40 / ATCC 43961 / DSM 17024</strain>
    </source>
</reference>
<proteinExistence type="inferred from homology"/>
<dbReference type="EC" id="6.3.4.5" evidence="1"/>
<dbReference type="EMBL" id="CP000282">
    <property type="protein sequence ID" value="ABD81683.1"/>
    <property type="molecule type" value="Genomic_DNA"/>
</dbReference>
<dbReference type="RefSeq" id="WP_011468900.1">
    <property type="nucleotide sequence ID" value="NC_007912.1"/>
</dbReference>
<dbReference type="SMR" id="Q21HZ6"/>
<dbReference type="STRING" id="203122.Sde_2423"/>
<dbReference type="GeneID" id="98614084"/>
<dbReference type="KEGG" id="sde:Sde_2423"/>
<dbReference type="eggNOG" id="COG0137">
    <property type="taxonomic scope" value="Bacteria"/>
</dbReference>
<dbReference type="HOGENOM" id="CLU_032784_4_2_6"/>
<dbReference type="OrthoDB" id="9801641at2"/>
<dbReference type="UniPathway" id="UPA00068">
    <property type="reaction ID" value="UER00113"/>
</dbReference>
<dbReference type="Proteomes" id="UP000001947">
    <property type="component" value="Chromosome"/>
</dbReference>
<dbReference type="GO" id="GO:0005737">
    <property type="term" value="C:cytoplasm"/>
    <property type="evidence" value="ECO:0007669"/>
    <property type="project" value="UniProtKB-SubCell"/>
</dbReference>
<dbReference type="GO" id="GO:0004055">
    <property type="term" value="F:argininosuccinate synthase activity"/>
    <property type="evidence" value="ECO:0007669"/>
    <property type="project" value="UniProtKB-UniRule"/>
</dbReference>
<dbReference type="GO" id="GO:0005524">
    <property type="term" value="F:ATP binding"/>
    <property type="evidence" value="ECO:0007669"/>
    <property type="project" value="UniProtKB-UniRule"/>
</dbReference>
<dbReference type="GO" id="GO:0000053">
    <property type="term" value="P:argininosuccinate metabolic process"/>
    <property type="evidence" value="ECO:0007669"/>
    <property type="project" value="TreeGrafter"/>
</dbReference>
<dbReference type="GO" id="GO:0006526">
    <property type="term" value="P:L-arginine biosynthetic process"/>
    <property type="evidence" value="ECO:0007669"/>
    <property type="project" value="UniProtKB-UniRule"/>
</dbReference>
<dbReference type="GO" id="GO:0000050">
    <property type="term" value="P:urea cycle"/>
    <property type="evidence" value="ECO:0007669"/>
    <property type="project" value="TreeGrafter"/>
</dbReference>
<dbReference type="CDD" id="cd01999">
    <property type="entry name" value="ASS"/>
    <property type="match status" value="1"/>
</dbReference>
<dbReference type="FunFam" id="1.20.5.470:FF:000001">
    <property type="entry name" value="Argininosuccinate synthase"/>
    <property type="match status" value="1"/>
</dbReference>
<dbReference type="FunFam" id="3.40.50.620:FF:000019">
    <property type="entry name" value="Argininosuccinate synthase"/>
    <property type="match status" value="1"/>
</dbReference>
<dbReference type="FunFam" id="3.90.1260.10:FF:000007">
    <property type="entry name" value="Argininosuccinate synthase"/>
    <property type="match status" value="1"/>
</dbReference>
<dbReference type="Gene3D" id="3.90.1260.10">
    <property type="entry name" value="Argininosuccinate synthetase, chain A, domain 2"/>
    <property type="match status" value="1"/>
</dbReference>
<dbReference type="Gene3D" id="3.40.50.620">
    <property type="entry name" value="HUPs"/>
    <property type="match status" value="1"/>
</dbReference>
<dbReference type="Gene3D" id="1.20.5.470">
    <property type="entry name" value="Single helix bin"/>
    <property type="match status" value="1"/>
</dbReference>
<dbReference type="HAMAP" id="MF_00005">
    <property type="entry name" value="Arg_succ_synth_type1"/>
    <property type="match status" value="1"/>
</dbReference>
<dbReference type="InterPro" id="IPR048268">
    <property type="entry name" value="Arginosuc_syn_C"/>
</dbReference>
<dbReference type="InterPro" id="IPR048267">
    <property type="entry name" value="Arginosuc_syn_N"/>
</dbReference>
<dbReference type="InterPro" id="IPR001518">
    <property type="entry name" value="Arginosuc_synth"/>
</dbReference>
<dbReference type="InterPro" id="IPR018223">
    <property type="entry name" value="Arginosuc_synth_CS"/>
</dbReference>
<dbReference type="InterPro" id="IPR023434">
    <property type="entry name" value="Arginosuc_synth_type_1_subfam"/>
</dbReference>
<dbReference type="InterPro" id="IPR024074">
    <property type="entry name" value="AS_cat/multimer_dom_body"/>
</dbReference>
<dbReference type="InterPro" id="IPR014729">
    <property type="entry name" value="Rossmann-like_a/b/a_fold"/>
</dbReference>
<dbReference type="NCBIfam" id="TIGR00032">
    <property type="entry name" value="argG"/>
    <property type="match status" value="1"/>
</dbReference>
<dbReference type="NCBIfam" id="NF001770">
    <property type="entry name" value="PRK00509.1"/>
    <property type="match status" value="1"/>
</dbReference>
<dbReference type="PANTHER" id="PTHR11587">
    <property type="entry name" value="ARGININOSUCCINATE SYNTHASE"/>
    <property type="match status" value="1"/>
</dbReference>
<dbReference type="PANTHER" id="PTHR11587:SF2">
    <property type="entry name" value="ARGININOSUCCINATE SYNTHASE"/>
    <property type="match status" value="1"/>
</dbReference>
<dbReference type="Pfam" id="PF20979">
    <property type="entry name" value="Arginosuc_syn_C"/>
    <property type="match status" value="1"/>
</dbReference>
<dbReference type="Pfam" id="PF00764">
    <property type="entry name" value="Arginosuc_synth"/>
    <property type="match status" value="1"/>
</dbReference>
<dbReference type="SUPFAM" id="SSF52402">
    <property type="entry name" value="Adenine nucleotide alpha hydrolases-like"/>
    <property type="match status" value="1"/>
</dbReference>
<dbReference type="SUPFAM" id="SSF69864">
    <property type="entry name" value="Argininosuccinate synthetase, C-terminal domain"/>
    <property type="match status" value="1"/>
</dbReference>
<dbReference type="PROSITE" id="PS00564">
    <property type="entry name" value="ARGININOSUCCIN_SYN_1"/>
    <property type="match status" value="1"/>
</dbReference>
<dbReference type="PROSITE" id="PS00565">
    <property type="entry name" value="ARGININOSUCCIN_SYN_2"/>
    <property type="match status" value="1"/>
</dbReference>
<protein>
    <recommendedName>
        <fullName evidence="1">Argininosuccinate synthase</fullName>
        <ecNumber evidence="1">6.3.4.5</ecNumber>
    </recommendedName>
    <alternativeName>
        <fullName evidence="1">Citrulline--aspartate ligase</fullName>
    </alternativeName>
</protein>
<feature type="chain" id="PRO_0000263968" description="Argininosuccinate synthase">
    <location>
        <begin position="1"/>
        <end position="409"/>
    </location>
</feature>
<feature type="binding site" evidence="1">
    <location>
        <begin position="13"/>
        <end position="21"/>
    </location>
    <ligand>
        <name>ATP</name>
        <dbReference type="ChEBI" id="CHEBI:30616"/>
    </ligand>
</feature>
<feature type="binding site" evidence="1">
    <location>
        <position position="40"/>
    </location>
    <ligand>
        <name>ATP</name>
        <dbReference type="ChEBI" id="CHEBI:30616"/>
    </ligand>
</feature>
<feature type="binding site" evidence="1">
    <location>
        <position position="91"/>
    </location>
    <ligand>
        <name>L-citrulline</name>
        <dbReference type="ChEBI" id="CHEBI:57743"/>
    </ligand>
</feature>
<feature type="binding site" evidence="1">
    <location>
        <position position="96"/>
    </location>
    <ligand>
        <name>L-citrulline</name>
        <dbReference type="ChEBI" id="CHEBI:57743"/>
    </ligand>
</feature>
<feature type="binding site" evidence="1">
    <location>
        <position position="121"/>
    </location>
    <ligand>
        <name>ATP</name>
        <dbReference type="ChEBI" id="CHEBI:30616"/>
    </ligand>
</feature>
<feature type="binding site" evidence="1">
    <location>
        <position position="123"/>
    </location>
    <ligand>
        <name>L-aspartate</name>
        <dbReference type="ChEBI" id="CHEBI:29991"/>
    </ligand>
</feature>
<feature type="binding site" evidence="1">
    <location>
        <position position="127"/>
    </location>
    <ligand>
        <name>L-aspartate</name>
        <dbReference type="ChEBI" id="CHEBI:29991"/>
    </ligand>
</feature>
<feature type="binding site" evidence="1">
    <location>
        <position position="127"/>
    </location>
    <ligand>
        <name>L-citrulline</name>
        <dbReference type="ChEBI" id="CHEBI:57743"/>
    </ligand>
</feature>
<feature type="binding site" evidence="1">
    <location>
        <position position="128"/>
    </location>
    <ligand>
        <name>L-aspartate</name>
        <dbReference type="ChEBI" id="CHEBI:29991"/>
    </ligand>
</feature>
<feature type="binding site" evidence="1">
    <location>
        <position position="131"/>
    </location>
    <ligand>
        <name>L-citrulline</name>
        <dbReference type="ChEBI" id="CHEBI:57743"/>
    </ligand>
</feature>
<feature type="binding site" evidence="1">
    <location>
        <position position="183"/>
    </location>
    <ligand>
        <name>L-citrulline</name>
        <dbReference type="ChEBI" id="CHEBI:57743"/>
    </ligand>
</feature>
<feature type="binding site" evidence="1">
    <location>
        <position position="192"/>
    </location>
    <ligand>
        <name>L-citrulline</name>
        <dbReference type="ChEBI" id="CHEBI:57743"/>
    </ligand>
</feature>
<feature type="binding site" evidence="1">
    <location>
        <position position="268"/>
    </location>
    <ligand>
        <name>L-citrulline</name>
        <dbReference type="ChEBI" id="CHEBI:57743"/>
    </ligand>
</feature>
<feature type="binding site" evidence="1">
    <location>
        <position position="280"/>
    </location>
    <ligand>
        <name>L-citrulline</name>
        <dbReference type="ChEBI" id="CHEBI:57743"/>
    </ligand>
</feature>
<gene>
    <name evidence="1" type="primary">argG</name>
    <name type="ordered locus">Sde_2423</name>
</gene>
<comment type="catalytic activity">
    <reaction evidence="1">
        <text>L-citrulline + L-aspartate + ATP = 2-(N(omega)-L-arginino)succinate + AMP + diphosphate + H(+)</text>
        <dbReference type="Rhea" id="RHEA:10932"/>
        <dbReference type="ChEBI" id="CHEBI:15378"/>
        <dbReference type="ChEBI" id="CHEBI:29991"/>
        <dbReference type="ChEBI" id="CHEBI:30616"/>
        <dbReference type="ChEBI" id="CHEBI:33019"/>
        <dbReference type="ChEBI" id="CHEBI:57472"/>
        <dbReference type="ChEBI" id="CHEBI:57743"/>
        <dbReference type="ChEBI" id="CHEBI:456215"/>
        <dbReference type="EC" id="6.3.4.5"/>
    </reaction>
</comment>
<comment type="pathway">
    <text evidence="1">Amino-acid biosynthesis; L-arginine biosynthesis; L-arginine from L-ornithine and carbamoyl phosphate: step 2/3.</text>
</comment>
<comment type="subunit">
    <text evidence="1">Homotetramer.</text>
</comment>
<comment type="subcellular location">
    <subcellularLocation>
        <location evidence="1">Cytoplasm</location>
    </subcellularLocation>
</comment>
<comment type="similarity">
    <text evidence="1">Belongs to the argininosuccinate synthase family. Type 1 subfamily.</text>
</comment>